<dbReference type="EC" id="2.7.7.27" evidence="1"/>
<dbReference type="EMBL" id="L42023">
    <property type="protein sequence ID" value="AAC23006.1"/>
    <property type="status" value="ALT_INIT"/>
    <property type="molecule type" value="Genomic_DNA"/>
</dbReference>
<dbReference type="PIR" id="B64119">
    <property type="entry name" value="B64119"/>
</dbReference>
<dbReference type="RefSeq" id="NP_439510.1">
    <property type="nucleotide sequence ID" value="NC_000907.1"/>
</dbReference>
<dbReference type="SMR" id="P43796"/>
<dbReference type="STRING" id="71421.HI_1359"/>
<dbReference type="EnsemblBacteria" id="AAC23006">
    <property type="protein sequence ID" value="AAC23006"/>
    <property type="gene ID" value="HI_1359"/>
</dbReference>
<dbReference type="KEGG" id="hin:HI_1359"/>
<dbReference type="PATRIC" id="fig|71421.8.peg.1412"/>
<dbReference type="eggNOG" id="COG0448">
    <property type="taxonomic scope" value="Bacteria"/>
</dbReference>
<dbReference type="HOGENOM" id="CLU_029499_14_1_6"/>
<dbReference type="OrthoDB" id="9801810at2"/>
<dbReference type="PhylomeDB" id="P43796"/>
<dbReference type="UniPathway" id="UPA00164"/>
<dbReference type="Proteomes" id="UP000000579">
    <property type="component" value="Chromosome"/>
</dbReference>
<dbReference type="GO" id="GO:0005524">
    <property type="term" value="F:ATP binding"/>
    <property type="evidence" value="ECO:0007669"/>
    <property type="project" value="UniProtKB-KW"/>
</dbReference>
<dbReference type="GO" id="GO:0008878">
    <property type="term" value="F:glucose-1-phosphate adenylyltransferase activity"/>
    <property type="evidence" value="ECO:0007669"/>
    <property type="project" value="UniProtKB-UniRule"/>
</dbReference>
<dbReference type="GO" id="GO:0005978">
    <property type="term" value="P:glycogen biosynthetic process"/>
    <property type="evidence" value="ECO:0007669"/>
    <property type="project" value="UniProtKB-UniRule"/>
</dbReference>
<dbReference type="CDD" id="cd02508">
    <property type="entry name" value="ADP_Glucose_PP"/>
    <property type="match status" value="1"/>
</dbReference>
<dbReference type="CDD" id="cd04651">
    <property type="entry name" value="LbH_G1P_AT_C"/>
    <property type="match status" value="1"/>
</dbReference>
<dbReference type="Gene3D" id="2.160.10.10">
    <property type="entry name" value="Hexapeptide repeat proteins"/>
    <property type="match status" value="1"/>
</dbReference>
<dbReference type="Gene3D" id="3.90.550.10">
    <property type="entry name" value="Spore Coat Polysaccharide Biosynthesis Protein SpsA, Chain A"/>
    <property type="match status" value="1"/>
</dbReference>
<dbReference type="HAMAP" id="MF_00624">
    <property type="entry name" value="GlgC"/>
    <property type="match status" value="1"/>
</dbReference>
<dbReference type="InterPro" id="IPR011831">
    <property type="entry name" value="ADP-Glc_PPase"/>
</dbReference>
<dbReference type="InterPro" id="IPR005836">
    <property type="entry name" value="ADP_Glu_pyroP_CS"/>
</dbReference>
<dbReference type="InterPro" id="IPR023049">
    <property type="entry name" value="GlgC_bac"/>
</dbReference>
<dbReference type="InterPro" id="IPR056818">
    <property type="entry name" value="GlmU/GlgC-like_hexapep"/>
</dbReference>
<dbReference type="InterPro" id="IPR005835">
    <property type="entry name" value="NTP_transferase_dom"/>
</dbReference>
<dbReference type="InterPro" id="IPR029044">
    <property type="entry name" value="Nucleotide-diphossugar_trans"/>
</dbReference>
<dbReference type="InterPro" id="IPR011004">
    <property type="entry name" value="Trimer_LpxA-like_sf"/>
</dbReference>
<dbReference type="NCBIfam" id="TIGR02091">
    <property type="entry name" value="glgC"/>
    <property type="match status" value="1"/>
</dbReference>
<dbReference type="NCBIfam" id="NF001947">
    <property type="entry name" value="PRK00725.1"/>
    <property type="match status" value="1"/>
</dbReference>
<dbReference type="NCBIfam" id="NF002023">
    <property type="entry name" value="PRK00844.1"/>
    <property type="match status" value="1"/>
</dbReference>
<dbReference type="PANTHER" id="PTHR43523:SF2">
    <property type="entry name" value="GLUCOSE-1-PHOSPHATE ADENYLYLTRANSFERASE"/>
    <property type="match status" value="1"/>
</dbReference>
<dbReference type="PANTHER" id="PTHR43523">
    <property type="entry name" value="GLUCOSE-1-PHOSPHATE ADENYLYLTRANSFERASE-RELATED"/>
    <property type="match status" value="1"/>
</dbReference>
<dbReference type="Pfam" id="PF24894">
    <property type="entry name" value="Hexapep_GlmU"/>
    <property type="match status" value="1"/>
</dbReference>
<dbReference type="Pfam" id="PF00483">
    <property type="entry name" value="NTP_transferase"/>
    <property type="match status" value="1"/>
</dbReference>
<dbReference type="SUPFAM" id="SSF53448">
    <property type="entry name" value="Nucleotide-diphospho-sugar transferases"/>
    <property type="match status" value="1"/>
</dbReference>
<dbReference type="SUPFAM" id="SSF51161">
    <property type="entry name" value="Trimeric LpxA-like enzymes"/>
    <property type="match status" value="1"/>
</dbReference>
<dbReference type="PROSITE" id="PS00808">
    <property type="entry name" value="ADP_GLC_PYROPHOSPH_1"/>
    <property type="match status" value="1"/>
</dbReference>
<dbReference type="PROSITE" id="PS00809">
    <property type="entry name" value="ADP_GLC_PYROPHOSPH_2"/>
    <property type="match status" value="1"/>
</dbReference>
<dbReference type="PROSITE" id="PS00810">
    <property type="entry name" value="ADP_GLC_PYROPHOSPH_3"/>
    <property type="match status" value="1"/>
</dbReference>
<protein>
    <recommendedName>
        <fullName evidence="1">Glucose-1-phosphate adenylyltransferase</fullName>
        <ecNumber evidence="1">2.7.7.27</ecNumber>
    </recommendedName>
    <alternativeName>
        <fullName evidence="1">ADP-glucose pyrophosphorylase</fullName>
        <shortName evidence="1">ADPGlc PPase</shortName>
    </alternativeName>
    <alternativeName>
        <fullName evidence="1">ADP-glucose synthase</fullName>
    </alternativeName>
</protein>
<keyword id="KW-0067">ATP-binding</keyword>
<keyword id="KW-0119">Carbohydrate metabolism</keyword>
<keyword id="KW-0320">Glycogen biosynthesis</keyword>
<keyword id="KW-0321">Glycogen metabolism</keyword>
<keyword id="KW-0547">Nucleotide-binding</keyword>
<keyword id="KW-0548">Nucleotidyltransferase</keyword>
<keyword id="KW-1185">Reference proteome</keyword>
<keyword id="KW-0808">Transferase</keyword>
<proteinExistence type="inferred from homology"/>
<gene>
    <name evidence="1" type="primary">glgC</name>
    <name type="ordered locus">HI_1359</name>
</gene>
<organism>
    <name type="scientific">Haemophilus influenzae (strain ATCC 51907 / DSM 11121 / KW20 / Rd)</name>
    <dbReference type="NCBI Taxonomy" id="71421"/>
    <lineage>
        <taxon>Bacteria</taxon>
        <taxon>Pseudomonadati</taxon>
        <taxon>Pseudomonadota</taxon>
        <taxon>Gammaproteobacteria</taxon>
        <taxon>Pasteurellales</taxon>
        <taxon>Pasteurellaceae</taxon>
        <taxon>Haemophilus</taxon>
    </lineage>
</organism>
<evidence type="ECO:0000255" key="1">
    <source>
        <dbReference type="HAMAP-Rule" id="MF_00624"/>
    </source>
</evidence>
<evidence type="ECO:0000305" key="2"/>
<accession>P43796</accession>
<comment type="function">
    <text evidence="1">Involved in the biosynthesis of ADP-glucose, a building block required for the elongation reactions to produce glycogen. Catalyzes the reaction between ATP and alpha-D-glucose 1-phosphate (G1P) to produce pyrophosphate and ADP-Glc.</text>
</comment>
<comment type="catalytic activity">
    <reaction evidence="1">
        <text>alpha-D-glucose 1-phosphate + ATP + H(+) = ADP-alpha-D-glucose + diphosphate</text>
        <dbReference type="Rhea" id="RHEA:12120"/>
        <dbReference type="ChEBI" id="CHEBI:15378"/>
        <dbReference type="ChEBI" id="CHEBI:30616"/>
        <dbReference type="ChEBI" id="CHEBI:33019"/>
        <dbReference type="ChEBI" id="CHEBI:57498"/>
        <dbReference type="ChEBI" id="CHEBI:58601"/>
        <dbReference type="EC" id="2.7.7.27"/>
    </reaction>
</comment>
<comment type="pathway">
    <text evidence="1">Glycan biosynthesis; glycogen biosynthesis.</text>
</comment>
<comment type="subunit">
    <text evidence="1">Homotetramer.</text>
</comment>
<comment type="similarity">
    <text evidence="1">Belongs to the bacterial/plant glucose-1-phosphate adenylyltransferase family.</text>
</comment>
<comment type="sequence caution" evidence="2">
    <conflict type="erroneous initiation">
        <sequence resource="EMBL-CDS" id="AAC23006"/>
    </conflict>
</comment>
<sequence>MEILMKSGDLNKYDLVKNALVLVLAGGRGSRLHELTDKRAKPALYFGGNRRIIDFALSNCINSDLNRIGVVTQYAAHSLLLHLQTGWSFLPQERGEFVDMLPARQQIDDSTWYRGTADAVYQNMAIIKNHYRPKYILILAGDHIYKQDYSVMLMDHVNSGAKCTVGCIEVPRSEAHEFGVMAVNENLKVKAFVEKPKDPPAMVGKPDVSLASMGIYVFDADYLYKMLEQEVNTPQTSHDFGKDVLPKCLEEGALYAHPFSRSCMGRNTEGEIYWRDVGTLDSFWQSNIDLVSENPQLDIYDQSWPIRGNPIQAYPSKFFYKHSNVHPVDNSLIGGGCVITDASISNSVLFDHIKIDAFSKVDHCVVLPQVKIGKNCVLKNCIIDRECEIPDGMQIGVDMEEDKKRFRISSTGKVILVTSKMLKILEGHEIGEEGHLD</sequence>
<reference key="1">
    <citation type="journal article" date="1995" name="Science">
        <title>Whole-genome random sequencing and assembly of Haemophilus influenzae Rd.</title>
        <authorList>
            <person name="Fleischmann R.D."/>
            <person name="Adams M.D."/>
            <person name="White O."/>
            <person name="Clayton R.A."/>
            <person name="Kirkness E.F."/>
            <person name="Kerlavage A.R."/>
            <person name="Bult C.J."/>
            <person name="Tomb J.-F."/>
            <person name="Dougherty B.A."/>
            <person name="Merrick J.M."/>
            <person name="McKenney K."/>
            <person name="Sutton G.G."/>
            <person name="FitzHugh W."/>
            <person name="Fields C.A."/>
            <person name="Gocayne J.D."/>
            <person name="Scott J.D."/>
            <person name="Shirley R."/>
            <person name="Liu L.-I."/>
            <person name="Glodek A."/>
            <person name="Kelley J.M."/>
            <person name="Weidman J.F."/>
            <person name="Phillips C.A."/>
            <person name="Spriggs T."/>
            <person name="Hedblom E."/>
            <person name="Cotton M.D."/>
            <person name="Utterback T.R."/>
            <person name="Hanna M.C."/>
            <person name="Nguyen D.T."/>
            <person name="Saudek D.M."/>
            <person name="Brandon R.C."/>
            <person name="Fine L.D."/>
            <person name="Fritchman J.L."/>
            <person name="Fuhrmann J.L."/>
            <person name="Geoghagen N.S.M."/>
            <person name="Gnehm C.L."/>
            <person name="McDonald L.A."/>
            <person name="Small K.V."/>
            <person name="Fraser C.M."/>
            <person name="Smith H.O."/>
            <person name="Venter J.C."/>
        </authorList>
    </citation>
    <scope>NUCLEOTIDE SEQUENCE [LARGE SCALE GENOMIC DNA]</scope>
    <source>
        <strain>ATCC 51907 / DSM 11121 / KW20 / Rd</strain>
    </source>
</reference>
<name>GLGC_HAEIN</name>
<feature type="chain" id="PRO_0000195299" description="Glucose-1-phosphate adenylyltransferase">
    <location>
        <begin position="1"/>
        <end position="437"/>
    </location>
</feature>
<feature type="binding site" evidence="1">
    <location>
        <position position="113"/>
    </location>
    <ligand>
        <name>alpha-D-glucose 1-phosphate</name>
        <dbReference type="ChEBI" id="CHEBI:58601"/>
    </ligand>
</feature>
<feature type="binding site" evidence="1">
    <location>
        <position position="179"/>
    </location>
    <ligand>
        <name>alpha-D-glucose 1-phosphate</name>
        <dbReference type="ChEBI" id="CHEBI:58601"/>
    </ligand>
</feature>
<feature type="binding site" evidence="1">
    <location>
        <begin position="194"/>
        <end position="195"/>
    </location>
    <ligand>
        <name>alpha-D-glucose 1-phosphate</name>
        <dbReference type="ChEBI" id="CHEBI:58601"/>
    </ligand>
</feature>
<feature type="binding site" evidence="1">
    <location>
        <position position="212"/>
    </location>
    <ligand>
        <name>alpha-D-glucose 1-phosphate</name>
        <dbReference type="ChEBI" id="CHEBI:58601"/>
    </ligand>
</feature>